<gene>
    <name evidence="1" type="primary">rpsU</name>
    <name type="ordered locus">SaurJH1_1667</name>
</gene>
<organism>
    <name type="scientific">Staphylococcus aureus (strain JH1)</name>
    <dbReference type="NCBI Taxonomy" id="359787"/>
    <lineage>
        <taxon>Bacteria</taxon>
        <taxon>Bacillati</taxon>
        <taxon>Bacillota</taxon>
        <taxon>Bacilli</taxon>
        <taxon>Bacillales</taxon>
        <taxon>Staphylococcaceae</taxon>
        <taxon>Staphylococcus</taxon>
    </lineage>
</organism>
<comment type="similarity">
    <text evidence="1">Belongs to the bacterial ribosomal protein bS21 family.</text>
</comment>
<keyword id="KW-0687">Ribonucleoprotein</keyword>
<keyword id="KW-0689">Ribosomal protein</keyword>
<dbReference type="EMBL" id="CP000736">
    <property type="protein sequence ID" value="ABR52515.1"/>
    <property type="molecule type" value="Genomic_DNA"/>
</dbReference>
<dbReference type="SMR" id="A6U247"/>
<dbReference type="KEGG" id="sah:SaurJH1_1667"/>
<dbReference type="HOGENOM" id="CLU_159258_3_2_9"/>
<dbReference type="GO" id="GO:1990904">
    <property type="term" value="C:ribonucleoprotein complex"/>
    <property type="evidence" value="ECO:0007669"/>
    <property type="project" value="UniProtKB-KW"/>
</dbReference>
<dbReference type="GO" id="GO:0005840">
    <property type="term" value="C:ribosome"/>
    <property type="evidence" value="ECO:0007669"/>
    <property type="project" value="UniProtKB-KW"/>
</dbReference>
<dbReference type="GO" id="GO:0003735">
    <property type="term" value="F:structural constituent of ribosome"/>
    <property type="evidence" value="ECO:0007669"/>
    <property type="project" value="InterPro"/>
</dbReference>
<dbReference type="GO" id="GO:0006412">
    <property type="term" value="P:translation"/>
    <property type="evidence" value="ECO:0007669"/>
    <property type="project" value="UniProtKB-UniRule"/>
</dbReference>
<dbReference type="Gene3D" id="1.20.5.1150">
    <property type="entry name" value="Ribosomal protein S8"/>
    <property type="match status" value="1"/>
</dbReference>
<dbReference type="HAMAP" id="MF_00358">
    <property type="entry name" value="Ribosomal_bS21"/>
    <property type="match status" value="1"/>
</dbReference>
<dbReference type="InterPro" id="IPR001911">
    <property type="entry name" value="Ribosomal_bS21"/>
</dbReference>
<dbReference type="InterPro" id="IPR018278">
    <property type="entry name" value="Ribosomal_bS21_CS"/>
</dbReference>
<dbReference type="InterPro" id="IPR038380">
    <property type="entry name" value="Ribosomal_bS21_sf"/>
</dbReference>
<dbReference type="NCBIfam" id="TIGR00030">
    <property type="entry name" value="S21p"/>
    <property type="match status" value="1"/>
</dbReference>
<dbReference type="PANTHER" id="PTHR21109">
    <property type="entry name" value="MITOCHONDRIAL 28S RIBOSOMAL PROTEIN S21"/>
    <property type="match status" value="1"/>
</dbReference>
<dbReference type="PANTHER" id="PTHR21109:SF22">
    <property type="entry name" value="SMALL RIBOSOMAL SUBUNIT PROTEIN BS21"/>
    <property type="match status" value="1"/>
</dbReference>
<dbReference type="Pfam" id="PF01165">
    <property type="entry name" value="Ribosomal_S21"/>
    <property type="match status" value="1"/>
</dbReference>
<dbReference type="PRINTS" id="PR00976">
    <property type="entry name" value="RIBOSOMALS21"/>
</dbReference>
<dbReference type="PROSITE" id="PS01181">
    <property type="entry name" value="RIBOSOMAL_S21"/>
    <property type="match status" value="1"/>
</dbReference>
<evidence type="ECO:0000255" key="1">
    <source>
        <dbReference type="HAMAP-Rule" id="MF_00358"/>
    </source>
</evidence>
<evidence type="ECO:0000305" key="2"/>
<accession>A6U247</accession>
<proteinExistence type="inferred from homology"/>
<feature type="chain" id="PRO_1000079423" description="Small ribosomal subunit protein bS21">
    <location>
        <begin position="1"/>
        <end position="58"/>
    </location>
</feature>
<reference key="1">
    <citation type="submission" date="2007-06" db="EMBL/GenBank/DDBJ databases">
        <title>Complete sequence of chromosome of Staphylococcus aureus subsp. aureus JH1.</title>
        <authorList>
            <consortium name="US DOE Joint Genome Institute"/>
            <person name="Copeland A."/>
            <person name="Lucas S."/>
            <person name="Lapidus A."/>
            <person name="Barry K."/>
            <person name="Detter J.C."/>
            <person name="Glavina del Rio T."/>
            <person name="Hammon N."/>
            <person name="Israni S."/>
            <person name="Dalin E."/>
            <person name="Tice H."/>
            <person name="Pitluck S."/>
            <person name="Chain P."/>
            <person name="Malfatti S."/>
            <person name="Shin M."/>
            <person name="Vergez L."/>
            <person name="Schmutz J."/>
            <person name="Larimer F."/>
            <person name="Land M."/>
            <person name="Hauser L."/>
            <person name="Kyrpides N."/>
            <person name="Ivanova N."/>
            <person name="Tomasz A."/>
            <person name="Richardson P."/>
        </authorList>
    </citation>
    <scope>NUCLEOTIDE SEQUENCE [LARGE SCALE GENOMIC DNA]</scope>
    <source>
        <strain>JH1</strain>
    </source>
</reference>
<name>RS21_STAA2</name>
<sequence>MSKTVVRKNESLEDALRRFKRSVSKSGTIQEVRKREFYEKPSVKRKKKSEAARKRKFK</sequence>
<protein>
    <recommendedName>
        <fullName evidence="1">Small ribosomal subunit protein bS21</fullName>
    </recommendedName>
    <alternativeName>
        <fullName evidence="2">30S ribosomal protein S21</fullName>
    </alternativeName>
</protein>